<feature type="chain" id="PRO_1000213892" description="Orotidine 5'-phosphate decarboxylase">
    <location>
        <begin position="1"/>
        <end position="274"/>
    </location>
</feature>
<feature type="active site" description="Proton donor" evidence="1">
    <location>
        <position position="95"/>
    </location>
</feature>
<protein>
    <recommendedName>
        <fullName evidence="1">Orotidine 5'-phosphate decarboxylase</fullName>
        <ecNumber evidence="1">4.1.1.23</ecNumber>
    </recommendedName>
    <alternativeName>
        <fullName evidence="1">OMP decarboxylase</fullName>
        <shortName evidence="1">OMPDCase</shortName>
        <shortName evidence="1">OMPdecase</shortName>
    </alternativeName>
</protein>
<proteinExistence type="inferred from homology"/>
<organism>
    <name type="scientific">Mycobacterium bovis (strain BCG / Tokyo 172 / ATCC 35737 / TMC 1019)</name>
    <dbReference type="NCBI Taxonomy" id="561275"/>
    <lineage>
        <taxon>Bacteria</taxon>
        <taxon>Bacillati</taxon>
        <taxon>Actinomycetota</taxon>
        <taxon>Actinomycetes</taxon>
        <taxon>Mycobacteriales</taxon>
        <taxon>Mycobacteriaceae</taxon>
        <taxon>Mycobacterium</taxon>
        <taxon>Mycobacterium tuberculosis complex</taxon>
    </lineage>
</organism>
<sequence length="274" mass="27377">MTGFGLRLAEAKARRGPLCLGIDPHPELLRGWDLATTADGLAAFCDICVRAFADFAVVKPQVAFFESYGAAGFAVLERTIAELRAADVLVLADAKRGDIGATMSAYATAWVGDSPLAADAVTASPYLGFGSLRPLLEVAAAHGRGVFVLAATSNPEGAAVQNAAADGRSVAQLVVDQVGAANEAAGPGPGSIGVVVGATAPQAPDLSAFTGPVLVPGVGVQGGRPEALGGLGGAASSQLLPAVAREVLRAGPGVPELRAAGERMRDAVAYLAAV</sequence>
<reference key="1">
    <citation type="journal article" date="2009" name="Vaccine">
        <title>Whole genome sequence analysis of Mycobacterium bovis bacillus Calmette-Guerin (BCG) Tokyo 172: a comparative study of BCG vaccine substrains.</title>
        <authorList>
            <person name="Seki M."/>
            <person name="Honda I."/>
            <person name="Fujita I."/>
            <person name="Yano I."/>
            <person name="Yamamoto S."/>
            <person name="Koyama A."/>
        </authorList>
    </citation>
    <scope>NUCLEOTIDE SEQUENCE [LARGE SCALE GENOMIC DNA]</scope>
    <source>
        <strain>BCG / Tokyo 172 / ATCC 35737 / TMC 1019</strain>
    </source>
</reference>
<comment type="catalytic activity">
    <reaction evidence="1">
        <text>orotidine 5'-phosphate + H(+) = UMP + CO2</text>
        <dbReference type="Rhea" id="RHEA:11596"/>
        <dbReference type="ChEBI" id="CHEBI:15378"/>
        <dbReference type="ChEBI" id="CHEBI:16526"/>
        <dbReference type="ChEBI" id="CHEBI:57538"/>
        <dbReference type="ChEBI" id="CHEBI:57865"/>
        <dbReference type="EC" id="4.1.1.23"/>
    </reaction>
</comment>
<comment type="pathway">
    <text evidence="1">Pyrimidine metabolism; UMP biosynthesis via de novo pathway; UMP from orotate: step 2/2.</text>
</comment>
<comment type="similarity">
    <text evidence="1">Belongs to the OMP decarboxylase family. Type 2 subfamily.</text>
</comment>
<gene>
    <name evidence="1" type="primary">pyrF</name>
    <name type="ordered locus">JTY_1421</name>
</gene>
<keyword id="KW-0210">Decarboxylase</keyword>
<keyword id="KW-0456">Lyase</keyword>
<keyword id="KW-0665">Pyrimidine biosynthesis</keyword>
<accession>C1AN30</accession>
<evidence type="ECO:0000255" key="1">
    <source>
        <dbReference type="HAMAP-Rule" id="MF_01215"/>
    </source>
</evidence>
<name>PYRF_MYCBT</name>
<dbReference type="EC" id="4.1.1.23" evidence="1"/>
<dbReference type="EMBL" id="AP010918">
    <property type="protein sequence ID" value="BAH25709.1"/>
    <property type="molecule type" value="Genomic_DNA"/>
</dbReference>
<dbReference type="RefSeq" id="WP_003407220.1">
    <property type="nucleotide sequence ID" value="NZ_CP014566.1"/>
</dbReference>
<dbReference type="SMR" id="C1AN30"/>
<dbReference type="KEGG" id="mbt:JTY_1421"/>
<dbReference type="HOGENOM" id="CLU_060704_0_0_11"/>
<dbReference type="UniPathway" id="UPA00070">
    <property type="reaction ID" value="UER00120"/>
</dbReference>
<dbReference type="GO" id="GO:0004590">
    <property type="term" value="F:orotidine-5'-phosphate decarboxylase activity"/>
    <property type="evidence" value="ECO:0007669"/>
    <property type="project" value="UniProtKB-UniRule"/>
</dbReference>
<dbReference type="GO" id="GO:0006207">
    <property type="term" value="P:'de novo' pyrimidine nucleobase biosynthetic process"/>
    <property type="evidence" value="ECO:0007669"/>
    <property type="project" value="InterPro"/>
</dbReference>
<dbReference type="GO" id="GO:0044205">
    <property type="term" value="P:'de novo' UMP biosynthetic process"/>
    <property type="evidence" value="ECO:0007669"/>
    <property type="project" value="UniProtKB-UniRule"/>
</dbReference>
<dbReference type="CDD" id="cd04725">
    <property type="entry name" value="OMP_decarboxylase_like"/>
    <property type="match status" value="1"/>
</dbReference>
<dbReference type="Gene3D" id="3.20.20.70">
    <property type="entry name" value="Aldolase class I"/>
    <property type="match status" value="1"/>
</dbReference>
<dbReference type="HAMAP" id="MF_01215">
    <property type="entry name" value="OMPdecase_type2"/>
    <property type="match status" value="1"/>
</dbReference>
<dbReference type="InterPro" id="IPR013785">
    <property type="entry name" value="Aldolase_TIM"/>
</dbReference>
<dbReference type="InterPro" id="IPR018089">
    <property type="entry name" value="OMPdecase_AS"/>
</dbReference>
<dbReference type="InterPro" id="IPR011995">
    <property type="entry name" value="OMPdecase_type-2"/>
</dbReference>
<dbReference type="InterPro" id="IPR001754">
    <property type="entry name" value="OMPdeCOase_dom"/>
</dbReference>
<dbReference type="InterPro" id="IPR011060">
    <property type="entry name" value="RibuloseP-bd_barrel"/>
</dbReference>
<dbReference type="NCBIfam" id="TIGR02127">
    <property type="entry name" value="pyrF_sub2"/>
    <property type="match status" value="1"/>
</dbReference>
<dbReference type="PANTHER" id="PTHR43375">
    <property type="entry name" value="OROTIDINE 5'-PHOSPHATE DECARBOXYLASE"/>
    <property type="match status" value="1"/>
</dbReference>
<dbReference type="PANTHER" id="PTHR43375:SF1">
    <property type="entry name" value="OROTIDINE 5'-PHOSPHATE DECARBOXYLASE"/>
    <property type="match status" value="1"/>
</dbReference>
<dbReference type="Pfam" id="PF00215">
    <property type="entry name" value="OMPdecase"/>
    <property type="match status" value="1"/>
</dbReference>
<dbReference type="SMART" id="SM00934">
    <property type="entry name" value="OMPdecase"/>
    <property type="match status" value="1"/>
</dbReference>
<dbReference type="SUPFAM" id="SSF51366">
    <property type="entry name" value="Ribulose-phoshate binding barrel"/>
    <property type="match status" value="1"/>
</dbReference>
<dbReference type="PROSITE" id="PS00156">
    <property type="entry name" value="OMPDECASE"/>
    <property type="match status" value="1"/>
</dbReference>